<proteinExistence type="inferred from homology"/>
<comment type="function">
    <text evidence="1">Catalyzes the isomerization between 2-isopropylmalate and 3-isopropylmalate, via the formation of 2-isopropylmaleate.</text>
</comment>
<comment type="catalytic activity">
    <reaction evidence="1">
        <text>(2R,3S)-3-isopropylmalate = (2S)-2-isopropylmalate</text>
        <dbReference type="Rhea" id="RHEA:32287"/>
        <dbReference type="ChEBI" id="CHEBI:1178"/>
        <dbReference type="ChEBI" id="CHEBI:35121"/>
        <dbReference type="EC" id="4.2.1.33"/>
    </reaction>
</comment>
<comment type="cofactor">
    <cofactor evidence="1">
        <name>[4Fe-4S] cluster</name>
        <dbReference type="ChEBI" id="CHEBI:49883"/>
    </cofactor>
    <text evidence="1">Binds 1 [4Fe-4S] cluster per subunit.</text>
</comment>
<comment type="pathway">
    <text evidence="1">Amino-acid biosynthesis; L-leucine biosynthesis; L-leucine from 3-methyl-2-oxobutanoate: step 2/4.</text>
</comment>
<comment type="subunit">
    <text evidence="1">Heterodimer of LeuC and LeuD.</text>
</comment>
<comment type="similarity">
    <text evidence="1">Belongs to the aconitase/IPM isomerase family. LeuC type 1 subfamily.</text>
</comment>
<evidence type="ECO:0000255" key="1">
    <source>
        <dbReference type="HAMAP-Rule" id="MF_01026"/>
    </source>
</evidence>
<accession>Q3Z5T8</accession>
<organism>
    <name type="scientific">Shigella sonnei (strain Ss046)</name>
    <dbReference type="NCBI Taxonomy" id="300269"/>
    <lineage>
        <taxon>Bacteria</taxon>
        <taxon>Pseudomonadati</taxon>
        <taxon>Pseudomonadota</taxon>
        <taxon>Gammaproteobacteria</taxon>
        <taxon>Enterobacterales</taxon>
        <taxon>Enterobacteriaceae</taxon>
        <taxon>Shigella</taxon>
    </lineage>
</organism>
<name>LEUC_SHISS</name>
<protein>
    <recommendedName>
        <fullName evidence="1">3-isopropylmalate dehydratase large subunit</fullName>
        <ecNumber evidence="1">4.2.1.33</ecNumber>
    </recommendedName>
    <alternativeName>
        <fullName evidence="1">Alpha-IPM isomerase</fullName>
        <shortName evidence="1">IPMI</shortName>
    </alternativeName>
    <alternativeName>
        <fullName evidence="1">Isopropylmalate isomerase</fullName>
    </alternativeName>
</protein>
<reference key="1">
    <citation type="journal article" date="2005" name="Nucleic Acids Res.">
        <title>Genome dynamics and diversity of Shigella species, the etiologic agents of bacillary dysentery.</title>
        <authorList>
            <person name="Yang F."/>
            <person name="Yang J."/>
            <person name="Zhang X."/>
            <person name="Chen L."/>
            <person name="Jiang Y."/>
            <person name="Yan Y."/>
            <person name="Tang X."/>
            <person name="Wang J."/>
            <person name="Xiong Z."/>
            <person name="Dong J."/>
            <person name="Xue Y."/>
            <person name="Zhu Y."/>
            <person name="Xu X."/>
            <person name="Sun L."/>
            <person name="Chen S."/>
            <person name="Nie H."/>
            <person name="Peng J."/>
            <person name="Xu J."/>
            <person name="Wang Y."/>
            <person name="Yuan Z."/>
            <person name="Wen Y."/>
            <person name="Yao Z."/>
            <person name="Shen Y."/>
            <person name="Qiang B."/>
            <person name="Hou Y."/>
            <person name="Yu J."/>
            <person name="Jin Q."/>
        </authorList>
    </citation>
    <scope>NUCLEOTIDE SEQUENCE [LARGE SCALE GENOMIC DNA]</scope>
    <source>
        <strain>Ss046</strain>
    </source>
</reference>
<feature type="chain" id="PRO_0000076809" description="3-isopropylmalate dehydratase large subunit">
    <location>
        <begin position="1"/>
        <end position="466"/>
    </location>
</feature>
<feature type="binding site" evidence="1">
    <location>
        <position position="347"/>
    </location>
    <ligand>
        <name>[4Fe-4S] cluster</name>
        <dbReference type="ChEBI" id="CHEBI:49883"/>
    </ligand>
</feature>
<feature type="binding site" evidence="1">
    <location>
        <position position="407"/>
    </location>
    <ligand>
        <name>[4Fe-4S] cluster</name>
        <dbReference type="ChEBI" id="CHEBI:49883"/>
    </ligand>
</feature>
<feature type="binding site" evidence="1">
    <location>
        <position position="410"/>
    </location>
    <ligand>
        <name>[4Fe-4S] cluster</name>
        <dbReference type="ChEBI" id="CHEBI:49883"/>
    </ligand>
</feature>
<keyword id="KW-0004">4Fe-4S</keyword>
<keyword id="KW-0028">Amino-acid biosynthesis</keyword>
<keyword id="KW-0100">Branched-chain amino acid biosynthesis</keyword>
<keyword id="KW-0408">Iron</keyword>
<keyword id="KW-0411">Iron-sulfur</keyword>
<keyword id="KW-0432">Leucine biosynthesis</keyword>
<keyword id="KW-0456">Lyase</keyword>
<keyword id="KW-0479">Metal-binding</keyword>
<keyword id="KW-1185">Reference proteome</keyword>
<gene>
    <name evidence="1" type="primary">leuC</name>
    <name type="ordered locus">SSON_0079</name>
</gene>
<sequence length="466" mass="49910">MAKTLYEKLFDAHVVYEAENETPLLYIDRHLVHEVTSPQAFNGLRAHGRPVRQPGKTFATMDHNVSTQTKDINACGEMARIQMQELIKNCKEFGVELYDLNHPYQGIVHVMGPEQGVTLPGMTIVCGDSHTATHGAFGALAFGIGTSEVEHVLATQTLKQGRAKTMKIEVQGKAAPGITAKDIVLAIIGKTGSAGGTGHVVEFCGEAIRDLSMEGRMTLCNMAIEMGAKTGLVAPDETTFNYVKGRLHAPKGKDFDDAVAYWKTLQTDEGATFDTVVTLQAEEISPQVTWGTNPGQVISVNDNIPDPASFADPVKRASAEKALAYMGLKPGIPLTEVAIDKVFIGSCTNSRIEDLRAAAEIAKGRKVAPGVQALVVPGSGPVKAQAEAEGLDKIFIEAGFEWRLPGCSMCLAMNNDRLNPGERCASTSNRNFEGRQGRGGRTHLVSPAMAAAAAVTGHFADIRNIK</sequence>
<dbReference type="EC" id="4.2.1.33" evidence="1"/>
<dbReference type="EMBL" id="CP000038">
    <property type="protein sequence ID" value="AAZ86874.1"/>
    <property type="molecule type" value="Genomic_DNA"/>
</dbReference>
<dbReference type="RefSeq" id="WP_001140681.1">
    <property type="nucleotide sequence ID" value="NC_007384.1"/>
</dbReference>
<dbReference type="SMR" id="Q3Z5T8"/>
<dbReference type="KEGG" id="ssn:SSON_0079"/>
<dbReference type="HOGENOM" id="CLU_006714_3_4_6"/>
<dbReference type="UniPathway" id="UPA00048">
    <property type="reaction ID" value="UER00071"/>
</dbReference>
<dbReference type="Proteomes" id="UP000002529">
    <property type="component" value="Chromosome"/>
</dbReference>
<dbReference type="GO" id="GO:0003861">
    <property type="term" value="F:3-isopropylmalate dehydratase activity"/>
    <property type="evidence" value="ECO:0007669"/>
    <property type="project" value="UniProtKB-UniRule"/>
</dbReference>
<dbReference type="GO" id="GO:0051539">
    <property type="term" value="F:4 iron, 4 sulfur cluster binding"/>
    <property type="evidence" value="ECO:0007669"/>
    <property type="project" value="UniProtKB-KW"/>
</dbReference>
<dbReference type="GO" id="GO:0046872">
    <property type="term" value="F:metal ion binding"/>
    <property type="evidence" value="ECO:0007669"/>
    <property type="project" value="UniProtKB-KW"/>
</dbReference>
<dbReference type="GO" id="GO:0009098">
    <property type="term" value="P:L-leucine biosynthetic process"/>
    <property type="evidence" value="ECO:0007669"/>
    <property type="project" value="UniProtKB-UniRule"/>
</dbReference>
<dbReference type="CDD" id="cd01583">
    <property type="entry name" value="IPMI"/>
    <property type="match status" value="1"/>
</dbReference>
<dbReference type="FunFam" id="3.30.499.10:FF:000006">
    <property type="entry name" value="3-isopropylmalate dehydratase large subunit"/>
    <property type="match status" value="1"/>
</dbReference>
<dbReference type="FunFam" id="3.30.499.10:FF:000007">
    <property type="entry name" value="3-isopropylmalate dehydratase large subunit"/>
    <property type="match status" value="1"/>
</dbReference>
<dbReference type="Gene3D" id="3.30.499.10">
    <property type="entry name" value="Aconitase, domain 3"/>
    <property type="match status" value="2"/>
</dbReference>
<dbReference type="HAMAP" id="MF_01026">
    <property type="entry name" value="LeuC_type1"/>
    <property type="match status" value="1"/>
</dbReference>
<dbReference type="InterPro" id="IPR004430">
    <property type="entry name" value="3-IsopropMal_deHydase_lsu"/>
</dbReference>
<dbReference type="InterPro" id="IPR015931">
    <property type="entry name" value="Acnase/IPM_dHydase_lsu_aba_1/3"/>
</dbReference>
<dbReference type="InterPro" id="IPR001030">
    <property type="entry name" value="Acoase/IPM_deHydtase_lsu_aba"/>
</dbReference>
<dbReference type="InterPro" id="IPR018136">
    <property type="entry name" value="Aconitase_4Fe-4S_BS"/>
</dbReference>
<dbReference type="InterPro" id="IPR036008">
    <property type="entry name" value="Aconitase_4Fe-4S_dom"/>
</dbReference>
<dbReference type="InterPro" id="IPR050067">
    <property type="entry name" value="IPM_dehydratase_rel_enz"/>
</dbReference>
<dbReference type="InterPro" id="IPR033941">
    <property type="entry name" value="IPMI_cat"/>
</dbReference>
<dbReference type="NCBIfam" id="TIGR00170">
    <property type="entry name" value="leuC"/>
    <property type="match status" value="1"/>
</dbReference>
<dbReference type="NCBIfam" id="NF004016">
    <property type="entry name" value="PRK05478.1"/>
    <property type="match status" value="1"/>
</dbReference>
<dbReference type="NCBIfam" id="NF009116">
    <property type="entry name" value="PRK12466.1"/>
    <property type="match status" value="1"/>
</dbReference>
<dbReference type="PANTHER" id="PTHR43822:SF9">
    <property type="entry name" value="3-ISOPROPYLMALATE DEHYDRATASE"/>
    <property type="match status" value="1"/>
</dbReference>
<dbReference type="PANTHER" id="PTHR43822">
    <property type="entry name" value="HOMOACONITASE, MITOCHONDRIAL-RELATED"/>
    <property type="match status" value="1"/>
</dbReference>
<dbReference type="Pfam" id="PF00330">
    <property type="entry name" value="Aconitase"/>
    <property type="match status" value="1"/>
</dbReference>
<dbReference type="PRINTS" id="PR00415">
    <property type="entry name" value="ACONITASE"/>
</dbReference>
<dbReference type="SUPFAM" id="SSF53732">
    <property type="entry name" value="Aconitase iron-sulfur domain"/>
    <property type="match status" value="1"/>
</dbReference>
<dbReference type="PROSITE" id="PS00450">
    <property type="entry name" value="ACONITASE_1"/>
    <property type="match status" value="1"/>
</dbReference>
<dbReference type="PROSITE" id="PS01244">
    <property type="entry name" value="ACONITASE_2"/>
    <property type="match status" value="1"/>
</dbReference>